<name>NADA_CAUVN</name>
<sequence>MADGFATAPQDFKGVFTPEIEAQTAPVWEKVKHHVTPMEWRVQAPLIVEINRLKREKNAAILAHNYMTPDIFHGVGDFVGDSLALAKEAAKSDAQIIVQAGVHFMAETSKVLSPEKKILIPDLKAGCSLASSITGADVRLIKQRYPGVPVVTYVNTTADVKAETDICCTSANAVQVVEWAAKEWGTDKVILIPDEFLARNVARQTDVKIIAWAGHCEVHKRFTAQDIADMRAAWPGAEVLAHPECPAEILEAADFAGSTAAMNDYVAAKKPAQVVLITECSMASNVQAESPATQFIGPCNMCPHMKRITLQNIYDALVHEQYEVTVDAEVLDRARLAVQRMIDLPPPAVPARYDLVKARHHVDVELI</sequence>
<evidence type="ECO:0000255" key="1">
    <source>
        <dbReference type="HAMAP-Rule" id="MF_00568"/>
    </source>
</evidence>
<keyword id="KW-0004">4Fe-4S</keyword>
<keyword id="KW-0963">Cytoplasm</keyword>
<keyword id="KW-0408">Iron</keyword>
<keyword id="KW-0411">Iron-sulfur</keyword>
<keyword id="KW-0479">Metal-binding</keyword>
<keyword id="KW-0662">Pyridine nucleotide biosynthesis</keyword>
<keyword id="KW-1185">Reference proteome</keyword>
<keyword id="KW-0808">Transferase</keyword>
<feature type="chain" id="PRO_1000146809" description="Quinolinate synthase">
    <location>
        <begin position="1"/>
        <end position="367"/>
    </location>
</feature>
<feature type="binding site" evidence="1">
    <location>
        <position position="64"/>
    </location>
    <ligand>
        <name>iminosuccinate</name>
        <dbReference type="ChEBI" id="CHEBI:77875"/>
    </ligand>
</feature>
<feature type="binding site" evidence="1">
    <location>
        <position position="82"/>
    </location>
    <ligand>
        <name>iminosuccinate</name>
        <dbReference type="ChEBI" id="CHEBI:77875"/>
    </ligand>
</feature>
<feature type="binding site" evidence="1">
    <location>
        <position position="127"/>
    </location>
    <ligand>
        <name>[4Fe-4S] cluster</name>
        <dbReference type="ChEBI" id="CHEBI:49883"/>
    </ligand>
</feature>
<feature type="binding site" evidence="1">
    <location>
        <begin position="153"/>
        <end position="155"/>
    </location>
    <ligand>
        <name>iminosuccinate</name>
        <dbReference type="ChEBI" id="CHEBI:77875"/>
    </ligand>
</feature>
<feature type="binding site" evidence="1">
    <location>
        <position position="170"/>
    </location>
    <ligand>
        <name>iminosuccinate</name>
        <dbReference type="ChEBI" id="CHEBI:77875"/>
    </ligand>
</feature>
<feature type="binding site" evidence="1">
    <location>
        <position position="216"/>
    </location>
    <ligand>
        <name>[4Fe-4S] cluster</name>
        <dbReference type="ChEBI" id="CHEBI:49883"/>
    </ligand>
</feature>
<feature type="binding site" evidence="1">
    <location>
        <begin position="242"/>
        <end position="244"/>
    </location>
    <ligand>
        <name>iminosuccinate</name>
        <dbReference type="ChEBI" id="CHEBI:77875"/>
    </ligand>
</feature>
<feature type="binding site" evidence="1">
    <location>
        <position position="259"/>
    </location>
    <ligand>
        <name>iminosuccinate</name>
        <dbReference type="ChEBI" id="CHEBI:77875"/>
    </ligand>
</feature>
<feature type="binding site" evidence="1">
    <location>
        <position position="302"/>
    </location>
    <ligand>
        <name>[4Fe-4S] cluster</name>
        <dbReference type="ChEBI" id="CHEBI:49883"/>
    </ligand>
</feature>
<organism>
    <name type="scientific">Caulobacter vibrioides (strain NA1000 / CB15N)</name>
    <name type="common">Caulobacter crescentus</name>
    <dbReference type="NCBI Taxonomy" id="565050"/>
    <lineage>
        <taxon>Bacteria</taxon>
        <taxon>Pseudomonadati</taxon>
        <taxon>Pseudomonadota</taxon>
        <taxon>Alphaproteobacteria</taxon>
        <taxon>Caulobacterales</taxon>
        <taxon>Caulobacteraceae</taxon>
        <taxon>Caulobacter</taxon>
    </lineage>
</organism>
<proteinExistence type="inferred from homology"/>
<gene>
    <name evidence="1" type="primary">nadA</name>
    <name type="ordered locus">CCNA_03006</name>
</gene>
<protein>
    <recommendedName>
        <fullName evidence="1">Quinolinate synthase</fullName>
        <ecNumber evidence="1">2.5.1.72</ecNumber>
    </recommendedName>
</protein>
<reference key="1">
    <citation type="journal article" date="2010" name="J. Bacteriol.">
        <title>The genetic basis of laboratory adaptation in Caulobacter crescentus.</title>
        <authorList>
            <person name="Marks M.E."/>
            <person name="Castro-Rojas C.M."/>
            <person name="Teiling C."/>
            <person name="Du L."/>
            <person name="Kapatral V."/>
            <person name="Walunas T.L."/>
            <person name="Crosson S."/>
        </authorList>
    </citation>
    <scope>NUCLEOTIDE SEQUENCE [LARGE SCALE GENOMIC DNA]</scope>
    <source>
        <strain>NA1000 / CB15N</strain>
    </source>
</reference>
<dbReference type="EC" id="2.5.1.72" evidence="1"/>
<dbReference type="EMBL" id="CP001340">
    <property type="protein sequence ID" value="ACL96471.2"/>
    <property type="molecule type" value="Genomic_DNA"/>
</dbReference>
<dbReference type="RefSeq" id="WP_024265876.1">
    <property type="nucleotide sequence ID" value="NC_011916.1"/>
</dbReference>
<dbReference type="RefSeq" id="YP_002518379.2">
    <property type="nucleotide sequence ID" value="NC_011916.1"/>
</dbReference>
<dbReference type="SMR" id="B8H2F3"/>
<dbReference type="GeneID" id="7333295"/>
<dbReference type="KEGG" id="ccs:CCNA_03006"/>
<dbReference type="PATRIC" id="fig|565050.3.peg.2934"/>
<dbReference type="HOGENOM" id="CLU_047382_0_0_5"/>
<dbReference type="OrthoDB" id="9801204at2"/>
<dbReference type="UniPathway" id="UPA00253">
    <property type="reaction ID" value="UER00327"/>
</dbReference>
<dbReference type="Proteomes" id="UP000001364">
    <property type="component" value="Chromosome"/>
</dbReference>
<dbReference type="GO" id="GO:0005829">
    <property type="term" value="C:cytosol"/>
    <property type="evidence" value="ECO:0007669"/>
    <property type="project" value="TreeGrafter"/>
</dbReference>
<dbReference type="GO" id="GO:0051539">
    <property type="term" value="F:4 iron, 4 sulfur cluster binding"/>
    <property type="evidence" value="ECO:0007669"/>
    <property type="project" value="UniProtKB-KW"/>
</dbReference>
<dbReference type="GO" id="GO:0046872">
    <property type="term" value="F:metal ion binding"/>
    <property type="evidence" value="ECO:0007669"/>
    <property type="project" value="UniProtKB-KW"/>
</dbReference>
<dbReference type="GO" id="GO:0008987">
    <property type="term" value="F:quinolinate synthetase A activity"/>
    <property type="evidence" value="ECO:0007669"/>
    <property type="project" value="UniProtKB-UniRule"/>
</dbReference>
<dbReference type="GO" id="GO:0034628">
    <property type="term" value="P:'de novo' NAD biosynthetic process from L-aspartate"/>
    <property type="evidence" value="ECO:0007669"/>
    <property type="project" value="TreeGrafter"/>
</dbReference>
<dbReference type="Gene3D" id="3.40.50.10800">
    <property type="entry name" value="NadA-like"/>
    <property type="match status" value="3"/>
</dbReference>
<dbReference type="HAMAP" id="MF_00568">
    <property type="entry name" value="NadA_type2"/>
    <property type="match status" value="1"/>
</dbReference>
<dbReference type="InterPro" id="IPR003473">
    <property type="entry name" value="NadA"/>
</dbReference>
<dbReference type="InterPro" id="IPR036094">
    <property type="entry name" value="NadA_sf"/>
</dbReference>
<dbReference type="InterPro" id="IPR023066">
    <property type="entry name" value="Quinolinate_synth_type2"/>
</dbReference>
<dbReference type="NCBIfam" id="TIGR00550">
    <property type="entry name" value="nadA"/>
    <property type="match status" value="1"/>
</dbReference>
<dbReference type="NCBIfam" id="NF006878">
    <property type="entry name" value="PRK09375.1-2"/>
    <property type="match status" value="1"/>
</dbReference>
<dbReference type="NCBIfam" id="NF006879">
    <property type="entry name" value="PRK09375.1-4"/>
    <property type="match status" value="1"/>
</dbReference>
<dbReference type="PANTHER" id="PTHR30573:SF0">
    <property type="entry name" value="QUINOLINATE SYNTHASE, CHLOROPLASTIC"/>
    <property type="match status" value="1"/>
</dbReference>
<dbReference type="PANTHER" id="PTHR30573">
    <property type="entry name" value="QUINOLINATE SYNTHETASE A"/>
    <property type="match status" value="1"/>
</dbReference>
<dbReference type="Pfam" id="PF02445">
    <property type="entry name" value="NadA"/>
    <property type="match status" value="1"/>
</dbReference>
<dbReference type="SUPFAM" id="SSF142754">
    <property type="entry name" value="NadA-like"/>
    <property type="match status" value="1"/>
</dbReference>
<accession>B8H2F3</accession>
<comment type="function">
    <text evidence="1">Catalyzes the condensation of iminoaspartate with dihydroxyacetone phosphate to form quinolinate.</text>
</comment>
<comment type="catalytic activity">
    <reaction evidence="1">
        <text>iminosuccinate + dihydroxyacetone phosphate = quinolinate + phosphate + 2 H2O + H(+)</text>
        <dbReference type="Rhea" id="RHEA:25888"/>
        <dbReference type="ChEBI" id="CHEBI:15377"/>
        <dbReference type="ChEBI" id="CHEBI:15378"/>
        <dbReference type="ChEBI" id="CHEBI:29959"/>
        <dbReference type="ChEBI" id="CHEBI:43474"/>
        <dbReference type="ChEBI" id="CHEBI:57642"/>
        <dbReference type="ChEBI" id="CHEBI:77875"/>
        <dbReference type="EC" id="2.5.1.72"/>
    </reaction>
    <physiologicalReaction direction="left-to-right" evidence="1">
        <dbReference type="Rhea" id="RHEA:25889"/>
    </physiologicalReaction>
</comment>
<comment type="cofactor">
    <cofactor evidence="1">
        <name>[4Fe-4S] cluster</name>
        <dbReference type="ChEBI" id="CHEBI:49883"/>
    </cofactor>
    <text evidence="1">Binds 1 [4Fe-4S] cluster per subunit.</text>
</comment>
<comment type="pathway">
    <text evidence="1">Cofactor biosynthesis; NAD(+) biosynthesis; quinolinate from iminoaspartate: step 1/1.</text>
</comment>
<comment type="subcellular location">
    <subcellularLocation>
        <location evidence="1">Cytoplasm</location>
    </subcellularLocation>
</comment>
<comment type="similarity">
    <text evidence="1">Belongs to the quinolinate synthase family. Type 2 subfamily.</text>
</comment>